<keyword id="KW-0963">Cytoplasm</keyword>
<keyword id="KW-0285">Flavoprotein</keyword>
<keyword id="KW-0288">FMN</keyword>
<keyword id="KW-0520">NAD</keyword>
<keyword id="KW-0560">Oxidoreductase</keyword>
<keyword id="KW-0665">Pyrimidine biosynthesis</keyword>
<reference key="1">
    <citation type="journal article" date="2011" name="J. Bacteriol.">
        <title>Genome sequence of lineage III Listeria monocytogenes strain HCC23.</title>
        <authorList>
            <person name="Steele C.L."/>
            <person name="Donaldson J.R."/>
            <person name="Paul D."/>
            <person name="Banes M.M."/>
            <person name="Arick T."/>
            <person name="Bridges S.M."/>
            <person name="Lawrence M.L."/>
        </authorList>
    </citation>
    <scope>NUCLEOTIDE SEQUENCE [LARGE SCALE GENOMIC DNA]</scope>
    <source>
        <strain>HCC23</strain>
    </source>
</reference>
<protein>
    <recommendedName>
        <fullName>Dihydroorotate dehydrogenase B (NAD(+)), catalytic subunit</fullName>
        <shortName>DHOD B</shortName>
        <shortName>DHODase B</shortName>
        <shortName>DHOdehase B</shortName>
        <ecNumber>1.3.1.14</ecNumber>
    </recommendedName>
    <alternativeName>
        <fullName>Dihydroorotate oxidase B</fullName>
    </alternativeName>
    <alternativeName>
        <fullName>Orotate reductase (NADH)</fullName>
    </alternativeName>
</protein>
<feature type="chain" id="PRO_1000195050" description="Dihydroorotate dehydrogenase B (NAD(+)), catalytic subunit">
    <location>
        <begin position="1"/>
        <end position="304"/>
    </location>
</feature>
<feature type="active site" description="Nucleophile">
    <location>
        <position position="130"/>
    </location>
</feature>
<feature type="binding site" evidence="1">
    <location>
        <position position="21"/>
    </location>
    <ligand>
        <name>FMN</name>
        <dbReference type="ChEBI" id="CHEBI:58210"/>
    </ligand>
</feature>
<feature type="binding site" evidence="1">
    <location>
        <begin position="45"/>
        <end position="46"/>
    </location>
    <ligand>
        <name>FMN</name>
        <dbReference type="ChEBI" id="CHEBI:58210"/>
    </ligand>
</feature>
<feature type="binding site" evidence="1">
    <location>
        <position position="45"/>
    </location>
    <ligand>
        <name>substrate</name>
    </ligand>
</feature>
<feature type="binding site" evidence="1">
    <location>
        <begin position="69"/>
        <end position="73"/>
    </location>
    <ligand>
        <name>substrate</name>
    </ligand>
</feature>
<feature type="binding site" evidence="1">
    <location>
        <position position="99"/>
    </location>
    <ligand>
        <name>FMN</name>
        <dbReference type="ChEBI" id="CHEBI:58210"/>
    </ligand>
</feature>
<feature type="binding site" evidence="1">
    <location>
        <position position="127"/>
    </location>
    <ligand>
        <name>FMN</name>
        <dbReference type="ChEBI" id="CHEBI:58210"/>
    </ligand>
</feature>
<feature type="binding site" evidence="1">
    <location>
        <position position="127"/>
    </location>
    <ligand>
        <name>substrate</name>
    </ligand>
</feature>
<feature type="binding site" evidence="1">
    <location>
        <position position="165"/>
    </location>
    <ligand>
        <name>FMN</name>
        <dbReference type="ChEBI" id="CHEBI:58210"/>
    </ligand>
</feature>
<feature type="binding site" evidence="1">
    <location>
        <position position="191"/>
    </location>
    <ligand>
        <name>FMN</name>
        <dbReference type="ChEBI" id="CHEBI:58210"/>
    </ligand>
</feature>
<feature type="binding site" evidence="1">
    <location>
        <begin position="192"/>
        <end position="193"/>
    </location>
    <ligand>
        <name>substrate</name>
    </ligand>
</feature>
<feature type="binding site" evidence="1">
    <location>
        <position position="217"/>
    </location>
    <ligand>
        <name>FMN</name>
        <dbReference type="ChEBI" id="CHEBI:58210"/>
    </ligand>
</feature>
<feature type="binding site" evidence="1">
    <location>
        <begin position="243"/>
        <end position="244"/>
    </location>
    <ligand>
        <name>FMN</name>
        <dbReference type="ChEBI" id="CHEBI:58210"/>
    </ligand>
</feature>
<feature type="binding site" evidence="1">
    <location>
        <begin position="265"/>
        <end position="266"/>
    </location>
    <ligand>
        <name>FMN</name>
        <dbReference type="ChEBI" id="CHEBI:58210"/>
    </ligand>
</feature>
<gene>
    <name type="primary">pyrD</name>
    <name type="ordered locus">LMHCC_0723</name>
</gene>
<accession>B8DDR9</accession>
<comment type="function">
    <text evidence="1">Catalyzes the conversion of dihydroorotate to orotate with NAD(+) as electron acceptor.</text>
</comment>
<comment type="catalytic activity">
    <reaction>
        <text>(S)-dihydroorotate + NAD(+) = orotate + NADH + H(+)</text>
        <dbReference type="Rhea" id="RHEA:13513"/>
        <dbReference type="ChEBI" id="CHEBI:15378"/>
        <dbReference type="ChEBI" id="CHEBI:30839"/>
        <dbReference type="ChEBI" id="CHEBI:30864"/>
        <dbReference type="ChEBI" id="CHEBI:57540"/>
        <dbReference type="ChEBI" id="CHEBI:57945"/>
        <dbReference type="EC" id="1.3.1.14"/>
    </reaction>
</comment>
<comment type="cofactor">
    <cofactor evidence="1">
        <name>FMN</name>
        <dbReference type="ChEBI" id="CHEBI:58210"/>
    </cofactor>
    <text evidence="1">Binds 1 FMN per subunit.</text>
</comment>
<comment type="pathway">
    <text>Pyrimidine metabolism; UMP biosynthesis via de novo pathway; orotate from (S)-dihydroorotate (NAD(+) route): step 1/1.</text>
</comment>
<comment type="subunit">
    <text evidence="1">Heterotetramer of 2 PyrK and 2 PyrD type B subunits.</text>
</comment>
<comment type="subcellular location">
    <subcellularLocation>
        <location evidence="1">Cytoplasm</location>
    </subcellularLocation>
</comment>
<comment type="similarity">
    <text evidence="2">Belongs to the dihydroorotate dehydrogenase family. Type 1 subfamily.</text>
</comment>
<sequence length="304" mass="32237">MNRLAVEIPGLSLKNPIMPASGCFGFGQEYSKYYDLNELGAIMAKAVTPEPRLGNPTPRVAETASGMLNAIGLQNPGLEHVLAHELPFLEQFETPIIANVAGATEDDYVQVCARIGESKAVKAIELNISCPNVKHGGIAFGTDPEVAHRLTKAVKNVATVPVYVKLSPNVADIVSIAQAIEAAGADGLTMINTLLGMRIDLKTRKPIIANGTGGLSGPAIKPVAIRMIHQVRAVSNIPIIGMGGVQTVDDVLEFLIAGADAVAVGTMNFTDPFICPKLISELPKRMDELGISSLQELKKERANQ</sequence>
<evidence type="ECO:0000250" key="1"/>
<evidence type="ECO:0000305" key="2"/>
<proteinExistence type="inferred from homology"/>
<dbReference type="EC" id="1.3.1.14"/>
<dbReference type="EMBL" id="CP001175">
    <property type="protein sequence ID" value="ACK39078.1"/>
    <property type="molecule type" value="Genomic_DNA"/>
</dbReference>
<dbReference type="RefSeq" id="WP_003733086.1">
    <property type="nucleotide sequence ID" value="NC_011660.1"/>
</dbReference>
<dbReference type="SMR" id="B8DDR9"/>
<dbReference type="KEGG" id="lmh:LMHCC_0723"/>
<dbReference type="HOGENOM" id="CLU_042042_0_0_9"/>
<dbReference type="UniPathway" id="UPA00070">
    <property type="reaction ID" value="UER00945"/>
</dbReference>
<dbReference type="GO" id="GO:0005737">
    <property type="term" value="C:cytoplasm"/>
    <property type="evidence" value="ECO:0007669"/>
    <property type="project" value="UniProtKB-SubCell"/>
</dbReference>
<dbReference type="GO" id="GO:0004589">
    <property type="term" value="F:dihydroorotate dehydrogenase (NAD+) activity"/>
    <property type="evidence" value="ECO:0007669"/>
    <property type="project" value="UniProtKB-EC"/>
</dbReference>
<dbReference type="GO" id="GO:0006207">
    <property type="term" value="P:'de novo' pyrimidine nucleobase biosynthetic process"/>
    <property type="evidence" value="ECO:0007669"/>
    <property type="project" value="InterPro"/>
</dbReference>
<dbReference type="GO" id="GO:0044205">
    <property type="term" value="P:'de novo' UMP biosynthetic process"/>
    <property type="evidence" value="ECO:0007669"/>
    <property type="project" value="UniProtKB-UniRule"/>
</dbReference>
<dbReference type="CDD" id="cd04740">
    <property type="entry name" value="DHOD_1B_like"/>
    <property type="match status" value="1"/>
</dbReference>
<dbReference type="FunFam" id="3.20.20.70:FF:000069">
    <property type="entry name" value="Dihydroorotate dehydrogenase"/>
    <property type="match status" value="1"/>
</dbReference>
<dbReference type="Gene3D" id="3.20.20.70">
    <property type="entry name" value="Aldolase class I"/>
    <property type="match status" value="1"/>
</dbReference>
<dbReference type="HAMAP" id="MF_00224">
    <property type="entry name" value="DHO_dh_type1"/>
    <property type="match status" value="1"/>
</dbReference>
<dbReference type="InterPro" id="IPR013785">
    <property type="entry name" value="Aldolase_TIM"/>
</dbReference>
<dbReference type="InterPro" id="IPR050074">
    <property type="entry name" value="DHO_dehydrogenase"/>
</dbReference>
<dbReference type="InterPro" id="IPR033888">
    <property type="entry name" value="DHOD_1B"/>
</dbReference>
<dbReference type="InterPro" id="IPR024920">
    <property type="entry name" value="Dihydroorotate_DH_1"/>
</dbReference>
<dbReference type="InterPro" id="IPR012135">
    <property type="entry name" value="Dihydroorotate_DH_1_2"/>
</dbReference>
<dbReference type="InterPro" id="IPR005720">
    <property type="entry name" value="Dihydroorotate_DH_cat"/>
</dbReference>
<dbReference type="InterPro" id="IPR001295">
    <property type="entry name" value="Dihydroorotate_DH_CS"/>
</dbReference>
<dbReference type="InterPro" id="IPR049622">
    <property type="entry name" value="Dihydroorotate_DH_I"/>
</dbReference>
<dbReference type="NCBIfam" id="NF005574">
    <property type="entry name" value="PRK07259.1"/>
    <property type="match status" value="1"/>
</dbReference>
<dbReference type="NCBIfam" id="TIGR01037">
    <property type="entry name" value="pyrD_sub1_fam"/>
    <property type="match status" value="1"/>
</dbReference>
<dbReference type="PANTHER" id="PTHR48109:SF1">
    <property type="entry name" value="DIHYDROOROTATE DEHYDROGENASE (FUMARATE)"/>
    <property type="match status" value="1"/>
</dbReference>
<dbReference type="PANTHER" id="PTHR48109">
    <property type="entry name" value="DIHYDROOROTATE DEHYDROGENASE (QUINONE), MITOCHONDRIAL-RELATED"/>
    <property type="match status" value="1"/>
</dbReference>
<dbReference type="Pfam" id="PF01180">
    <property type="entry name" value="DHO_dh"/>
    <property type="match status" value="1"/>
</dbReference>
<dbReference type="PIRSF" id="PIRSF000164">
    <property type="entry name" value="DHO_oxidase"/>
    <property type="match status" value="1"/>
</dbReference>
<dbReference type="SUPFAM" id="SSF51395">
    <property type="entry name" value="FMN-linked oxidoreductases"/>
    <property type="match status" value="1"/>
</dbReference>
<dbReference type="PROSITE" id="PS00911">
    <property type="entry name" value="DHODEHASE_1"/>
    <property type="match status" value="1"/>
</dbReference>
<dbReference type="PROSITE" id="PS00912">
    <property type="entry name" value="DHODEHASE_2"/>
    <property type="match status" value="1"/>
</dbReference>
<organism>
    <name type="scientific">Listeria monocytogenes serotype 4a (strain HCC23)</name>
    <dbReference type="NCBI Taxonomy" id="552536"/>
    <lineage>
        <taxon>Bacteria</taxon>
        <taxon>Bacillati</taxon>
        <taxon>Bacillota</taxon>
        <taxon>Bacilli</taxon>
        <taxon>Bacillales</taxon>
        <taxon>Listeriaceae</taxon>
        <taxon>Listeria</taxon>
    </lineage>
</organism>
<name>PYRDB_LISMH</name>